<reference key="1">
    <citation type="journal article" date="2004" name="Proc. Natl. Acad. Sci. U.S.A.">
        <title>Complete genomes of two clinical Staphylococcus aureus strains: evidence for the rapid evolution of virulence and drug resistance.</title>
        <authorList>
            <person name="Holden M.T.G."/>
            <person name="Feil E.J."/>
            <person name="Lindsay J.A."/>
            <person name="Peacock S.J."/>
            <person name="Day N.P.J."/>
            <person name="Enright M.C."/>
            <person name="Foster T.J."/>
            <person name="Moore C.E."/>
            <person name="Hurst L."/>
            <person name="Atkin R."/>
            <person name="Barron A."/>
            <person name="Bason N."/>
            <person name="Bentley S.D."/>
            <person name="Chillingworth C."/>
            <person name="Chillingworth T."/>
            <person name="Churcher C."/>
            <person name="Clark L."/>
            <person name="Corton C."/>
            <person name="Cronin A."/>
            <person name="Doggett J."/>
            <person name="Dowd L."/>
            <person name="Feltwell T."/>
            <person name="Hance Z."/>
            <person name="Harris B."/>
            <person name="Hauser H."/>
            <person name="Holroyd S."/>
            <person name="Jagels K."/>
            <person name="James K.D."/>
            <person name="Lennard N."/>
            <person name="Line A."/>
            <person name="Mayes R."/>
            <person name="Moule S."/>
            <person name="Mungall K."/>
            <person name="Ormond D."/>
            <person name="Quail M.A."/>
            <person name="Rabbinowitsch E."/>
            <person name="Rutherford K.M."/>
            <person name="Sanders M."/>
            <person name="Sharp S."/>
            <person name="Simmonds M."/>
            <person name="Stevens K."/>
            <person name="Whitehead S."/>
            <person name="Barrell B.G."/>
            <person name="Spratt B.G."/>
            <person name="Parkhill J."/>
        </authorList>
    </citation>
    <scope>NUCLEOTIDE SEQUENCE [LARGE SCALE GENOMIC DNA]</scope>
    <source>
        <strain>MSSA476</strain>
    </source>
</reference>
<accession>Q6GBV9</accession>
<evidence type="ECO:0000305" key="1"/>
<feature type="chain" id="PRO_0000068681" description="Serine acetyltransferase">
    <location>
        <begin position="1"/>
        <end position="215"/>
    </location>
</feature>
<keyword id="KW-0012">Acyltransferase</keyword>
<keyword id="KW-0028">Amino-acid biosynthesis</keyword>
<keyword id="KW-0198">Cysteine biosynthesis</keyword>
<keyword id="KW-0963">Cytoplasm</keyword>
<keyword id="KW-0677">Repeat</keyword>
<keyword id="KW-0808">Transferase</keyword>
<protein>
    <recommendedName>
        <fullName>Serine acetyltransferase</fullName>
        <shortName>SAT</shortName>
        <ecNumber>2.3.1.30</ecNumber>
    </recommendedName>
</protein>
<proteinExistence type="inferred from homology"/>
<organism>
    <name type="scientific">Staphylococcus aureus (strain MSSA476)</name>
    <dbReference type="NCBI Taxonomy" id="282459"/>
    <lineage>
        <taxon>Bacteria</taxon>
        <taxon>Bacillati</taxon>
        <taxon>Bacillota</taxon>
        <taxon>Bacilli</taxon>
        <taxon>Bacillales</taxon>
        <taxon>Staphylococcaceae</taxon>
        <taxon>Staphylococcus</taxon>
    </lineage>
</organism>
<name>CYSE_STAAS</name>
<sequence>MILLKRMRDDIKMVFEQDPAARSTLEVITTYAGLHAVWSHLIAHKLYNQKKYVAARAISQISRFFTGIEIHPGAKIGKRLFIDHGMGVVIGETCTIGDNVTIYQGVTLGGTGKERGKRHPDIGDNVLIAAGAKVLGNIKINSNVNIGANSVVLQSVPSYSTVVGIPGHIVKQDGVRVGKTFDHRHLPDPIYEQIKHLERQLEKTRNGEIQDDYII</sequence>
<dbReference type="EC" id="2.3.1.30"/>
<dbReference type="EMBL" id="BX571857">
    <property type="protein sequence ID" value="CAG42261.1"/>
    <property type="molecule type" value="Genomic_DNA"/>
</dbReference>
<dbReference type="RefSeq" id="WP_001805237.1">
    <property type="nucleotide sequence ID" value="NC_002953.3"/>
</dbReference>
<dbReference type="SMR" id="Q6GBV9"/>
<dbReference type="KEGG" id="sas:SAS0486"/>
<dbReference type="HOGENOM" id="CLU_051638_10_0_9"/>
<dbReference type="UniPathway" id="UPA00136">
    <property type="reaction ID" value="UER00199"/>
</dbReference>
<dbReference type="GO" id="GO:0005737">
    <property type="term" value="C:cytoplasm"/>
    <property type="evidence" value="ECO:0007669"/>
    <property type="project" value="UniProtKB-SubCell"/>
</dbReference>
<dbReference type="GO" id="GO:0009001">
    <property type="term" value="F:serine O-acetyltransferase activity"/>
    <property type="evidence" value="ECO:0007669"/>
    <property type="project" value="UniProtKB-EC"/>
</dbReference>
<dbReference type="GO" id="GO:0006535">
    <property type="term" value="P:cysteine biosynthetic process from serine"/>
    <property type="evidence" value="ECO:0007669"/>
    <property type="project" value="InterPro"/>
</dbReference>
<dbReference type="CDD" id="cd03354">
    <property type="entry name" value="LbH_SAT"/>
    <property type="match status" value="1"/>
</dbReference>
<dbReference type="FunFam" id="1.10.3130.10:FF:000002">
    <property type="entry name" value="Serine acetyltransferase"/>
    <property type="match status" value="1"/>
</dbReference>
<dbReference type="FunFam" id="2.160.10.10:FF:000007">
    <property type="entry name" value="Serine acetyltransferase"/>
    <property type="match status" value="1"/>
</dbReference>
<dbReference type="Gene3D" id="2.160.10.10">
    <property type="entry name" value="Hexapeptide repeat proteins"/>
    <property type="match status" value="1"/>
</dbReference>
<dbReference type="Gene3D" id="1.10.3130.10">
    <property type="entry name" value="serine acetyltransferase, domain 1"/>
    <property type="match status" value="1"/>
</dbReference>
<dbReference type="InterPro" id="IPR001451">
    <property type="entry name" value="Hexapep"/>
</dbReference>
<dbReference type="InterPro" id="IPR045304">
    <property type="entry name" value="LbH_SAT"/>
</dbReference>
<dbReference type="InterPro" id="IPR042122">
    <property type="entry name" value="Ser_AcTrfase_N_sf"/>
</dbReference>
<dbReference type="InterPro" id="IPR005881">
    <property type="entry name" value="Ser_O-AcTrfase"/>
</dbReference>
<dbReference type="InterPro" id="IPR053376">
    <property type="entry name" value="Serine_acetyltransferase"/>
</dbReference>
<dbReference type="InterPro" id="IPR011004">
    <property type="entry name" value="Trimer_LpxA-like_sf"/>
</dbReference>
<dbReference type="NCBIfam" id="TIGR01172">
    <property type="entry name" value="cysE"/>
    <property type="match status" value="1"/>
</dbReference>
<dbReference type="NCBIfam" id="NF041874">
    <property type="entry name" value="EPS_EpsC"/>
    <property type="match status" value="1"/>
</dbReference>
<dbReference type="PANTHER" id="PTHR42811">
    <property type="entry name" value="SERINE ACETYLTRANSFERASE"/>
    <property type="match status" value="1"/>
</dbReference>
<dbReference type="Pfam" id="PF00132">
    <property type="entry name" value="Hexapep"/>
    <property type="match status" value="1"/>
</dbReference>
<dbReference type="PIRSF" id="PIRSF000441">
    <property type="entry name" value="CysE"/>
    <property type="match status" value="1"/>
</dbReference>
<dbReference type="SUPFAM" id="SSF51161">
    <property type="entry name" value="Trimeric LpxA-like enzymes"/>
    <property type="match status" value="1"/>
</dbReference>
<comment type="catalytic activity">
    <reaction>
        <text>L-serine + acetyl-CoA = O-acetyl-L-serine + CoA</text>
        <dbReference type="Rhea" id="RHEA:24560"/>
        <dbReference type="ChEBI" id="CHEBI:33384"/>
        <dbReference type="ChEBI" id="CHEBI:57287"/>
        <dbReference type="ChEBI" id="CHEBI:57288"/>
        <dbReference type="ChEBI" id="CHEBI:58340"/>
        <dbReference type="EC" id="2.3.1.30"/>
    </reaction>
</comment>
<comment type="pathway">
    <text>Amino-acid biosynthesis; L-cysteine biosynthesis; L-cysteine from L-serine: step 1/2.</text>
</comment>
<comment type="subcellular location">
    <subcellularLocation>
        <location>Cytoplasm</location>
    </subcellularLocation>
</comment>
<comment type="similarity">
    <text evidence="1">Belongs to the transferase hexapeptide repeat family.</text>
</comment>
<gene>
    <name type="primary">cysE</name>
    <name type="ordered locus">SAS0486</name>
</gene>